<name>LEP_MYCLE</name>
<feature type="chain" id="PRO_0000109510" description="Probable signal peptidase I">
    <location>
        <begin position="1"/>
        <end position="289"/>
    </location>
</feature>
<feature type="topological domain" description="Cytoplasmic" evidence="2">
    <location>
        <begin position="1"/>
        <end position="53"/>
    </location>
</feature>
<feature type="transmembrane region" description="Helical" evidence="2">
    <location>
        <begin position="54"/>
        <end position="74"/>
    </location>
</feature>
<feature type="topological domain" description="Extracellular" evidence="2">
    <location>
        <begin position="75"/>
        <end position="289"/>
    </location>
</feature>
<feature type="active site" evidence="1">
    <location>
        <position position="84"/>
    </location>
</feature>
<feature type="active site" evidence="1">
    <location>
        <position position="162"/>
    </location>
</feature>
<evidence type="ECO:0000250" key="1"/>
<evidence type="ECO:0000255" key="2"/>
<evidence type="ECO:0000305" key="3"/>
<accession>O33021</accession>
<comment type="catalytic activity">
    <reaction>
        <text>Cleavage of hydrophobic, N-terminal signal or leader sequences from secreted and periplasmic proteins.</text>
        <dbReference type="EC" id="3.4.21.89"/>
    </reaction>
</comment>
<comment type="subcellular location">
    <subcellularLocation>
        <location evidence="1">Cell membrane</location>
        <topology evidence="1">Single-pass type II membrane protein</topology>
    </subcellularLocation>
</comment>
<comment type="similarity">
    <text evidence="3">Belongs to the peptidase S26 family.</text>
</comment>
<keyword id="KW-1003">Cell membrane</keyword>
<keyword id="KW-0378">Hydrolase</keyword>
<keyword id="KW-0472">Membrane</keyword>
<keyword id="KW-0645">Protease</keyword>
<keyword id="KW-1185">Reference proteome</keyword>
<keyword id="KW-0812">Transmembrane</keyword>
<keyword id="KW-1133">Transmembrane helix</keyword>
<organism>
    <name type="scientific">Mycobacterium leprae (strain TN)</name>
    <dbReference type="NCBI Taxonomy" id="272631"/>
    <lineage>
        <taxon>Bacteria</taxon>
        <taxon>Bacillati</taxon>
        <taxon>Actinomycetota</taxon>
        <taxon>Actinomycetes</taxon>
        <taxon>Mycobacteriales</taxon>
        <taxon>Mycobacteriaceae</taxon>
        <taxon>Mycobacterium</taxon>
    </lineage>
</organism>
<proteinExistence type="inferred from homology"/>
<sequence>MTETTDSVPEPPSDADQLQPKVSICGLDMPAEVSETAAEAAIGVSEPKKRSALWEFAILAVIAIGLYYVMLTFVARPYLIPSESMEPTLHGCSGCVGDRIMVDKITYRFSSPQPGDVIVFKGPPSWNTMYKSIRSNNIVLRSVQNALSFVGFVPPDENDLVKRVIAVGGQTVQCRSDTGLTVNGKPLKEPYLRPVTMNADLSFSPCLGSEFGPVTVPQGRLWVMGDNRIHSADSRYHCNSTDVVNGLSCTGDPNSGTVPVSNVIGKARVVVWPPSRWGGVGSVNSQQGQ</sequence>
<reference key="1">
    <citation type="journal article" date="2001" name="Nature">
        <title>Massive gene decay in the leprosy bacillus.</title>
        <authorList>
            <person name="Cole S.T."/>
            <person name="Eiglmeier K."/>
            <person name="Parkhill J."/>
            <person name="James K.D."/>
            <person name="Thomson N.R."/>
            <person name="Wheeler P.R."/>
            <person name="Honore N."/>
            <person name="Garnier T."/>
            <person name="Churcher C.M."/>
            <person name="Harris D.E."/>
            <person name="Mungall K.L."/>
            <person name="Basham D."/>
            <person name="Brown D."/>
            <person name="Chillingworth T."/>
            <person name="Connor R."/>
            <person name="Davies R.M."/>
            <person name="Devlin K."/>
            <person name="Duthoy S."/>
            <person name="Feltwell T."/>
            <person name="Fraser A."/>
            <person name="Hamlin N."/>
            <person name="Holroyd S."/>
            <person name="Hornsby T."/>
            <person name="Jagels K."/>
            <person name="Lacroix C."/>
            <person name="Maclean J."/>
            <person name="Moule S."/>
            <person name="Murphy L.D."/>
            <person name="Oliver K."/>
            <person name="Quail M.A."/>
            <person name="Rajandream M.A."/>
            <person name="Rutherford K.M."/>
            <person name="Rutter S."/>
            <person name="Seeger K."/>
            <person name="Simon S."/>
            <person name="Simmonds M."/>
            <person name="Skelton J."/>
            <person name="Squares R."/>
            <person name="Squares S."/>
            <person name="Stevens K."/>
            <person name="Taylor K."/>
            <person name="Whitehead S."/>
            <person name="Woodward J.R."/>
            <person name="Barrell B.G."/>
        </authorList>
    </citation>
    <scope>NUCLEOTIDE SEQUENCE [LARGE SCALE GENOMIC DNA]</scope>
    <source>
        <strain>TN</strain>
    </source>
</reference>
<protein>
    <recommendedName>
        <fullName>Probable signal peptidase I</fullName>
        <shortName>SPase I</shortName>
        <ecNumber>3.4.21.89</ecNumber>
    </recommendedName>
    <alternativeName>
        <fullName>Leader peptidase I</fullName>
    </alternativeName>
</protein>
<dbReference type="EC" id="3.4.21.89"/>
<dbReference type="EMBL" id="Z97369">
    <property type="protein sequence ID" value="CAB10633.1"/>
    <property type="molecule type" value="Genomic_DNA"/>
</dbReference>
<dbReference type="EMBL" id="AL583922">
    <property type="protein sequence ID" value="CAC30563.1"/>
    <property type="molecule type" value="Genomic_DNA"/>
</dbReference>
<dbReference type="PIR" id="F87110">
    <property type="entry name" value="F87110"/>
</dbReference>
<dbReference type="RefSeq" id="NP_302111.1">
    <property type="nucleotide sequence ID" value="NC_002677.1"/>
</dbReference>
<dbReference type="RefSeq" id="WP_010908432.1">
    <property type="nucleotide sequence ID" value="NC_002677.1"/>
</dbReference>
<dbReference type="SMR" id="O33021"/>
<dbReference type="STRING" id="272631.gene:17575453"/>
<dbReference type="MEROPS" id="S26.024"/>
<dbReference type="KEGG" id="mle:ML1612"/>
<dbReference type="PATRIC" id="fig|272631.5.peg.3038"/>
<dbReference type="Leproma" id="ML1612"/>
<dbReference type="eggNOG" id="COG0681">
    <property type="taxonomic scope" value="Bacteria"/>
</dbReference>
<dbReference type="HOGENOM" id="CLU_028723_0_0_11"/>
<dbReference type="OrthoDB" id="9815782at2"/>
<dbReference type="Proteomes" id="UP000000806">
    <property type="component" value="Chromosome"/>
</dbReference>
<dbReference type="GO" id="GO:0005886">
    <property type="term" value="C:plasma membrane"/>
    <property type="evidence" value="ECO:0007669"/>
    <property type="project" value="UniProtKB-SubCell"/>
</dbReference>
<dbReference type="GO" id="GO:0004252">
    <property type="term" value="F:serine-type endopeptidase activity"/>
    <property type="evidence" value="ECO:0007669"/>
    <property type="project" value="UniProtKB-EC"/>
</dbReference>
<dbReference type="GO" id="GO:0006465">
    <property type="term" value="P:signal peptide processing"/>
    <property type="evidence" value="ECO:0007669"/>
    <property type="project" value="InterPro"/>
</dbReference>
<dbReference type="CDD" id="cd06530">
    <property type="entry name" value="S26_SPase_I"/>
    <property type="match status" value="1"/>
</dbReference>
<dbReference type="Gene3D" id="2.10.109.10">
    <property type="entry name" value="Umud Fragment, subunit A"/>
    <property type="match status" value="1"/>
</dbReference>
<dbReference type="InterPro" id="IPR036286">
    <property type="entry name" value="LexA/Signal_pep-like_sf"/>
</dbReference>
<dbReference type="InterPro" id="IPR000223">
    <property type="entry name" value="Pept_S26A_signal_pept_1"/>
</dbReference>
<dbReference type="InterPro" id="IPR019758">
    <property type="entry name" value="Pept_S26A_signal_pept_1_CS"/>
</dbReference>
<dbReference type="InterPro" id="IPR019756">
    <property type="entry name" value="Pept_S26A_signal_pept_1_Ser-AS"/>
</dbReference>
<dbReference type="InterPro" id="IPR019533">
    <property type="entry name" value="Peptidase_S26"/>
</dbReference>
<dbReference type="NCBIfam" id="TIGR02227">
    <property type="entry name" value="sigpep_I_bact"/>
    <property type="match status" value="1"/>
</dbReference>
<dbReference type="PANTHER" id="PTHR43390:SF1">
    <property type="entry name" value="CHLOROPLAST PROCESSING PEPTIDASE"/>
    <property type="match status" value="1"/>
</dbReference>
<dbReference type="PANTHER" id="PTHR43390">
    <property type="entry name" value="SIGNAL PEPTIDASE I"/>
    <property type="match status" value="1"/>
</dbReference>
<dbReference type="Pfam" id="PF10502">
    <property type="entry name" value="Peptidase_S26"/>
    <property type="match status" value="1"/>
</dbReference>
<dbReference type="PRINTS" id="PR00727">
    <property type="entry name" value="LEADERPTASE"/>
</dbReference>
<dbReference type="SUPFAM" id="SSF51306">
    <property type="entry name" value="LexA/Signal peptidase"/>
    <property type="match status" value="1"/>
</dbReference>
<dbReference type="PROSITE" id="PS00501">
    <property type="entry name" value="SPASE_I_1"/>
    <property type="match status" value="1"/>
</dbReference>
<dbReference type="PROSITE" id="PS00761">
    <property type="entry name" value="SPASE_I_3"/>
    <property type="match status" value="1"/>
</dbReference>
<gene>
    <name type="primary">lepB</name>
    <name type="ordered locus">ML1612</name>
    <name type="ORF">MLCB250.39</name>
</gene>